<accession>C1DFK0</accession>
<gene>
    <name evidence="1" type="primary">panD</name>
    <name type="ordered locus">Avin_42730</name>
</gene>
<dbReference type="EC" id="4.1.1.11" evidence="1"/>
<dbReference type="EMBL" id="CP001157">
    <property type="protein sequence ID" value="ACO80396.1"/>
    <property type="molecule type" value="Genomic_DNA"/>
</dbReference>
<dbReference type="RefSeq" id="WP_012702764.1">
    <property type="nucleotide sequence ID" value="NC_012560.1"/>
</dbReference>
<dbReference type="SMR" id="C1DFK0"/>
<dbReference type="STRING" id="322710.Avin_42730"/>
<dbReference type="EnsemblBacteria" id="ACO80396">
    <property type="protein sequence ID" value="ACO80396"/>
    <property type="gene ID" value="Avin_42730"/>
</dbReference>
<dbReference type="GeneID" id="88187187"/>
<dbReference type="KEGG" id="avn:Avin_42730"/>
<dbReference type="eggNOG" id="COG0853">
    <property type="taxonomic scope" value="Bacteria"/>
</dbReference>
<dbReference type="HOGENOM" id="CLU_115305_2_1_6"/>
<dbReference type="OrthoDB" id="9803983at2"/>
<dbReference type="UniPathway" id="UPA00028">
    <property type="reaction ID" value="UER00002"/>
</dbReference>
<dbReference type="Proteomes" id="UP000002424">
    <property type="component" value="Chromosome"/>
</dbReference>
<dbReference type="GO" id="GO:0005829">
    <property type="term" value="C:cytosol"/>
    <property type="evidence" value="ECO:0007669"/>
    <property type="project" value="TreeGrafter"/>
</dbReference>
<dbReference type="GO" id="GO:0004068">
    <property type="term" value="F:aspartate 1-decarboxylase activity"/>
    <property type="evidence" value="ECO:0007669"/>
    <property type="project" value="UniProtKB-UniRule"/>
</dbReference>
<dbReference type="GO" id="GO:0006523">
    <property type="term" value="P:alanine biosynthetic process"/>
    <property type="evidence" value="ECO:0007669"/>
    <property type="project" value="InterPro"/>
</dbReference>
<dbReference type="GO" id="GO:0015940">
    <property type="term" value="P:pantothenate biosynthetic process"/>
    <property type="evidence" value="ECO:0007669"/>
    <property type="project" value="UniProtKB-UniRule"/>
</dbReference>
<dbReference type="CDD" id="cd06919">
    <property type="entry name" value="Asp_decarbox"/>
    <property type="match status" value="1"/>
</dbReference>
<dbReference type="Gene3D" id="2.40.40.20">
    <property type="match status" value="1"/>
</dbReference>
<dbReference type="HAMAP" id="MF_00446">
    <property type="entry name" value="PanD"/>
    <property type="match status" value="1"/>
</dbReference>
<dbReference type="InterPro" id="IPR009010">
    <property type="entry name" value="Asp_de-COase-like_dom_sf"/>
</dbReference>
<dbReference type="InterPro" id="IPR003190">
    <property type="entry name" value="Asp_decarbox"/>
</dbReference>
<dbReference type="NCBIfam" id="TIGR00223">
    <property type="entry name" value="panD"/>
    <property type="match status" value="1"/>
</dbReference>
<dbReference type="PANTHER" id="PTHR21012">
    <property type="entry name" value="ASPARTATE 1-DECARBOXYLASE"/>
    <property type="match status" value="1"/>
</dbReference>
<dbReference type="PANTHER" id="PTHR21012:SF0">
    <property type="entry name" value="ASPARTATE 1-DECARBOXYLASE"/>
    <property type="match status" value="1"/>
</dbReference>
<dbReference type="Pfam" id="PF02261">
    <property type="entry name" value="Asp_decarbox"/>
    <property type="match status" value="1"/>
</dbReference>
<dbReference type="PIRSF" id="PIRSF006246">
    <property type="entry name" value="Asp_decarbox"/>
    <property type="match status" value="1"/>
</dbReference>
<dbReference type="SUPFAM" id="SSF50692">
    <property type="entry name" value="ADC-like"/>
    <property type="match status" value="1"/>
</dbReference>
<organism>
    <name type="scientific">Azotobacter vinelandii (strain DJ / ATCC BAA-1303)</name>
    <dbReference type="NCBI Taxonomy" id="322710"/>
    <lineage>
        <taxon>Bacteria</taxon>
        <taxon>Pseudomonadati</taxon>
        <taxon>Pseudomonadota</taxon>
        <taxon>Gammaproteobacteria</taxon>
        <taxon>Pseudomonadales</taxon>
        <taxon>Pseudomonadaceae</taxon>
        <taxon>Azotobacter</taxon>
    </lineage>
</organism>
<evidence type="ECO:0000255" key="1">
    <source>
        <dbReference type="HAMAP-Rule" id="MF_00446"/>
    </source>
</evidence>
<protein>
    <recommendedName>
        <fullName evidence="1">Aspartate 1-decarboxylase</fullName>
        <ecNumber evidence="1">4.1.1.11</ecNumber>
    </recommendedName>
    <alternativeName>
        <fullName evidence="1">Aspartate alpha-decarboxylase</fullName>
    </alternativeName>
    <component>
        <recommendedName>
            <fullName evidence="1">Aspartate 1-decarboxylase beta chain</fullName>
        </recommendedName>
    </component>
    <component>
        <recommendedName>
            <fullName evidence="1">Aspartate 1-decarboxylase alpha chain</fullName>
        </recommendedName>
    </component>
</protein>
<comment type="function">
    <text evidence="1">Catalyzes the pyruvoyl-dependent decarboxylation of aspartate to produce beta-alanine.</text>
</comment>
<comment type="catalytic activity">
    <reaction evidence="1">
        <text>L-aspartate + H(+) = beta-alanine + CO2</text>
        <dbReference type="Rhea" id="RHEA:19497"/>
        <dbReference type="ChEBI" id="CHEBI:15378"/>
        <dbReference type="ChEBI" id="CHEBI:16526"/>
        <dbReference type="ChEBI" id="CHEBI:29991"/>
        <dbReference type="ChEBI" id="CHEBI:57966"/>
        <dbReference type="EC" id="4.1.1.11"/>
    </reaction>
</comment>
<comment type="cofactor">
    <cofactor evidence="1">
        <name>pyruvate</name>
        <dbReference type="ChEBI" id="CHEBI:15361"/>
    </cofactor>
    <text evidence="1">Binds 1 pyruvoyl group covalently per subunit.</text>
</comment>
<comment type="pathway">
    <text evidence="1">Cofactor biosynthesis; (R)-pantothenate biosynthesis; beta-alanine from L-aspartate: step 1/1.</text>
</comment>
<comment type="subunit">
    <text evidence="1">Heterooctamer of four alpha and four beta subunits.</text>
</comment>
<comment type="subcellular location">
    <subcellularLocation>
        <location evidence="1">Cytoplasm</location>
    </subcellularLocation>
</comment>
<comment type="PTM">
    <text evidence="1">Is synthesized initially as an inactive proenzyme, which is activated by self-cleavage at a specific serine bond to produce a beta-subunit with a hydroxyl group at its C-terminus and an alpha-subunit with a pyruvoyl group at its N-terminus.</text>
</comment>
<comment type="similarity">
    <text evidence="1">Belongs to the PanD family.</text>
</comment>
<reference key="1">
    <citation type="journal article" date="2009" name="J. Bacteriol.">
        <title>Genome sequence of Azotobacter vinelandii, an obligate aerobe specialized to support diverse anaerobic metabolic processes.</title>
        <authorList>
            <person name="Setubal J.C."/>
            <person name="Dos Santos P."/>
            <person name="Goldman B.S."/>
            <person name="Ertesvaag H."/>
            <person name="Espin G."/>
            <person name="Rubio L.M."/>
            <person name="Valla S."/>
            <person name="Almeida N.F."/>
            <person name="Balasubramanian D."/>
            <person name="Cromes L."/>
            <person name="Curatti L."/>
            <person name="Du Z."/>
            <person name="Godsy E."/>
            <person name="Goodner B."/>
            <person name="Hellner-Burris K."/>
            <person name="Hernandez J.A."/>
            <person name="Houmiel K."/>
            <person name="Imperial J."/>
            <person name="Kennedy C."/>
            <person name="Larson T.J."/>
            <person name="Latreille P."/>
            <person name="Ligon L.S."/>
            <person name="Lu J."/>
            <person name="Maerk M."/>
            <person name="Miller N.M."/>
            <person name="Norton S."/>
            <person name="O'Carroll I.P."/>
            <person name="Paulsen I."/>
            <person name="Raulfs E.C."/>
            <person name="Roemer R."/>
            <person name="Rosser J."/>
            <person name="Segura D."/>
            <person name="Slater S."/>
            <person name="Stricklin S.L."/>
            <person name="Studholme D.J."/>
            <person name="Sun J."/>
            <person name="Viana C.J."/>
            <person name="Wallin E."/>
            <person name="Wang B."/>
            <person name="Wheeler C."/>
            <person name="Zhu H."/>
            <person name="Dean D.R."/>
            <person name="Dixon R."/>
            <person name="Wood D."/>
        </authorList>
    </citation>
    <scope>NUCLEOTIDE SEQUENCE [LARGE SCALE GENOMIC DNA]</scope>
    <source>
        <strain>DJ / ATCC BAA-1303</strain>
    </source>
</reference>
<feature type="chain" id="PRO_1000206166" description="Aspartate 1-decarboxylase beta chain" evidence="1">
    <location>
        <begin position="1"/>
        <end position="24"/>
    </location>
</feature>
<feature type="chain" id="PRO_1000206167" description="Aspartate 1-decarboxylase alpha chain" evidence="1">
    <location>
        <begin position="25"/>
        <end position="126"/>
    </location>
</feature>
<feature type="active site" description="Schiff-base intermediate with substrate; via pyruvic acid" evidence="1">
    <location>
        <position position="25"/>
    </location>
</feature>
<feature type="active site" description="Proton donor" evidence="1">
    <location>
        <position position="58"/>
    </location>
</feature>
<feature type="binding site" evidence="1">
    <location>
        <position position="57"/>
    </location>
    <ligand>
        <name>substrate</name>
    </ligand>
</feature>
<feature type="binding site" evidence="1">
    <location>
        <begin position="73"/>
        <end position="75"/>
    </location>
    <ligand>
        <name>substrate</name>
    </ligand>
</feature>
<feature type="modified residue" description="Pyruvic acid (Ser)" evidence="1">
    <location>
        <position position="25"/>
    </location>
</feature>
<keyword id="KW-0068">Autocatalytic cleavage</keyword>
<keyword id="KW-0963">Cytoplasm</keyword>
<keyword id="KW-0210">Decarboxylase</keyword>
<keyword id="KW-0456">Lyase</keyword>
<keyword id="KW-0566">Pantothenate biosynthesis</keyword>
<keyword id="KW-0670">Pyruvate</keyword>
<keyword id="KW-0704">Schiff base</keyword>
<keyword id="KW-0865">Zymogen</keyword>
<proteinExistence type="inferred from homology"/>
<sequence>MHAIMLKAKLHRAEVTHSVLDYEGSCAIDGEWLDLAGIHEYEQIQIYNVDNGERFTTYAIRAEDGSKMISVNGAAAHKAQKGDRVIICAYAHYSEAELATHKPRMLYMAPGNVLSHTSNAIPVQVA</sequence>
<name>PAND_AZOVD</name>